<evidence type="ECO:0000250" key="1"/>
<evidence type="ECO:0000250" key="2">
    <source>
        <dbReference type="UniProtKB" id="Q0D4J7"/>
    </source>
</evidence>
<evidence type="ECO:0000255" key="3">
    <source>
        <dbReference type="PROSITE-ProRule" id="PRU00159"/>
    </source>
</evidence>
<evidence type="ECO:0000255" key="4">
    <source>
        <dbReference type="PROSITE-ProRule" id="PRU10027"/>
    </source>
</evidence>
<evidence type="ECO:0000305" key="5"/>
<evidence type="ECO:0000312" key="6">
    <source>
        <dbReference type="EMBL" id="EEC82470.1"/>
    </source>
</evidence>
<reference key="1">
    <citation type="submission" date="2002-12" db="EMBL/GenBank/DDBJ databases">
        <title>Oryza sativa (indica cultivar-group) abcisic acid-inducible protein kinase mRNA.</title>
        <authorList>
            <person name="Wei C."/>
            <person name="Yang J.-S."/>
        </authorList>
    </citation>
    <scope>NUCLEOTIDE SEQUENCE [MRNA]</scope>
    <source>
        <strain>cv. Zhenshan 97A</strain>
        <tissue>Leaf</tissue>
    </source>
</reference>
<reference key="2">
    <citation type="journal article" date="2005" name="PLoS Biol.">
        <title>The genomes of Oryza sativa: a history of duplications.</title>
        <authorList>
            <person name="Yu J."/>
            <person name="Wang J."/>
            <person name="Lin W."/>
            <person name="Li S."/>
            <person name="Li H."/>
            <person name="Zhou J."/>
            <person name="Ni P."/>
            <person name="Dong W."/>
            <person name="Hu S."/>
            <person name="Zeng C."/>
            <person name="Zhang J."/>
            <person name="Zhang Y."/>
            <person name="Li R."/>
            <person name="Xu Z."/>
            <person name="Li S."/>
            <person name="Li X."/>
            <person name="Zheng H."/>
            <person name="Cong L."/>
            <person name="Lin L."/>
            <person name="Yin J."/>
            <person name="Geng J."/>
            <person name="Li G."/>
            <person name="Shi J."/>
            <person name="Liu J."/>
            <person name="Lv H."/>
            <person name="Li J."/>
            <person name="Wang J."/>
            <person name="Deng Y."/>
            <person name="Ran L."/>
            <person name="Shi X."/>
            <person name="Wang X."/>
            <person name="Wu Q."/>
            <person name="Li C."/>
            <person name="Ren X."/>
            <person name="Wang J."/>
            <person name="Wang X."/>
            <person name="Li D."/>
            <person name="Liu D."/>
            <person name="Zhang X."/>
            <person name="Ji Z."/>
            <person name="Zhao W."/>
            <person name="Sun Y."/>
            <person name="Zhang Z."/>
            <person name="Bao J."/>
            <person name="Han Y."/>
            <person name="Dong L."/>
            <person name="Ji J."/>
            <person name="Chen P."/>
            <person name="Wu S."/>
            <person name="Liu J."/>
            <person name="Xiao Y."/>
            <person name="Bu D."/>
            <person name="Tan J."/>
            <person name="Yang L."/>
            <person name="Ye C."/>
            <person name="Zhang J."/>
            <person name="Xu J."/>
            <person name="Zhou Y."/>
            <person name="Yu Y."/>
            <person name="Zhang B."/>
            <person name="Zhuang S."/>
            <person name="Wei H."/>
            <person name="Liu B."/>
            <person name="Lei M."/>
            <person name="Yu H."/>
            <person name="Li Y."/>
            <person name="Xu H."/>
            <person name="Wei S."/>
            <person name="He X."/>
            <person name="Fang L."/>
            <person name="Zhang Z."/>
            <person name="Zhang Y."/>
            <person name="Huang X."/>
            <person name="Su Z."/>
            <person name="Tong W."/>
            <person name="Li J."/>
            <person name="Tong Z."/>
            <person name="Li S."/>
            <person name="Ye J."/>
            <person name="Wang L."/>
            <person name="Fang L."/>
            <person name="Lei T."/>
            <person name="Chen C.-S."/>
            <person name="Chen H.-C."/>
            <person name="Xu Z."/>
            <person name="Li H."/>
            <person name="Huang H."/>
            <person name="Zhang F."/>
            <person name="Xu H."/>
            <person name="Li N."/>
            <person name="Zhao C."/>
            <person name="Li S."/>
            <person name="Dong L."/>
            <person name="Huang Y."/>
            <person name="Li L."/>
            <person name="Xi Y."/>
            <person name="Qi Q."/>
            <person name="Li W."/>
            <person name="Zhang B."/>
            <person name="Hu W."/>
            <person name="Zhang Y."/>
            <person name="Tian X."/>
            <person name="Jiao Y."/>
            <person name="Liang X."/>
            <person name="Jin J."/>
            <person name="Gao L."/>
            <person name="Zheng W."/>
            <person name="Hao B."/>
            <person name="Liu S.-M."/>
            <person name="Wang W."/>
            <person name="Yuan L."/>
            <person name="Cao M."/>
            <person name="McDermott J."/>
            <person name="Samudrala R."/>
            <person name="Wang J."/>
            <person name="Wong G.K.-S."/>
            <person name="Yang H."/>
        </authorList>
    </citation>
    <scope>NUCLEOTIDE SEQUENCE [LARGE SCALE GENOMIC DNA]</scope>
    <source>
        <strain>cv. 93-11</strain>
    </source>
</reference>
<reference key="3">
    <citation type="journal article" date="2004" name="Plant Cell">
        <title>Differential activation of the rice sucrose nonfermenting1-related protein kinase2 family by hyperosmotic stress and abscisic acid.</title>
        <authorList>
            <person name="Kobayashi Y."/>
            <person name="Yamamoto S."/>
            <person name="Minami H."/>
            <person name="Kagaya Y."/>
            <person name="Hattori T."/>
        </authorList>
    </citation>
    <scope>NOMENCLATURE</scope>
</reference>
<accession>A2YNT8</accession>
<accession>B8B8N4</accession>
<accession>Q84TC6</accession>
<accession>Q8LH98</accession>
<name>SAPK2_ORYSI</name>
<comment type="function">
    <text evidence="1 2">May play a role in signal transduction of hyperosmotic response (By similarity). Can phosphorylate BZIP46 in vitro (By similarity).</text>
</comment>
<comment type="catalytic activity">
    <reaction>
        <text>L-seryl-[protein] + ATP = O-phospho-L-seryl-[protein] + ADP + H(+)</text>
        <dbReference type="Rhea" id="RHEA:17989"/>
        <dbReference type="Rhea" id="RHEA-COMP:9863"/>
        <dbReference type="Rhea" id="RHEA-COMP:11604"/>
        <dbReference type="ChEBI" id="CHEBI:15378"/>
        <dbReference type="ChEBI" id="CHEBI:29999"/>
        <dbReference type="ChEBI" id="CHEBI:30616"/>
        <dbReference type="ChEBI" id="CHEBI:83421"/>
        <dbReference type="ChEBI" id="CHEBI:456216"/>
        <dbReference type="EC" id="2.7.11.1"/>
    </reaction>
</comment>
<comment type="catalytic activity">
    <reaction>
        <text>L-threonyl-[protein] + ATP = O-phospho-L-threonyl-[protein] + ADP + H(+)</text>
        <dbReference type="Rhea" id="RHEA:46608"/>
        <dbReference type="Rhea" id="RHEA-COMP:11060"/>
        <dbReference type="Rhea" id="RHEA-COMP:11605"/>
        <dbReference type="ChEBI" id="CHEBI:15378"/>
        <dbReference type="ChEBI" id="CHEBI:30013"/>
        <dbReference type="ChEBI" id="CHEBI:30616"/>
        <dbReference type="ChEBI" id="CHEBI:61977"/>
        <dbReference type="ChEBI" id="CHEBI:456216"/>
        <dbReference type="EC" id="2.7.11.1"/>
    </reaction>
</comment>
<comment type="domain">
    <text>The C-terminal region is necessary for the kinase activation in response to hyperosmotic stress.</text>
</comment>
<comment type="PTM">
    <text evidence="1">Phosphorylated.</text>
</comment>
<comment type="similarity">
    <text evidence="3">Belongs to the protein kinase superfamily. Ser/Thr protein kinase family.</text>
</comment>
<comment type="sequence caution" evidence="5">
    <conflict type="erroneous initiation">
        <sequence resource="EMBL-CDS" id="AAO65504"/>
    </conflict>
    <text>Extended N-terminus.</text>
</comment>
<proteinExistence type="evidence at transcript level"/>
<organism>
    <name type="scientific">Oryza sativa subsp. indica</name>
    <name type="common">Rice</name>
    <dbReference type="NCBI Taxonomy" id="39946"/>
    <lineage>
        <taxon>Eukaryota</taxon>
        <taxon>Viridiplantae</taxon>
        <taxon>Streptophyta</taxon>
        <taxon>Embryophyta</taxon>
        <taxon>Tracheophyta</taxon>
        <taxon>Spermatophyta</taxon>
        <taxon>Magnoliopsida</taxon>
        <taxon>Liliopsida</taxon>
        <taxon>Poales</taxon>
        <taxon>Poaceae</taxon>
        <taxon>BOP clade</taxon>
        <taxon>Oryzoideae</taxon>
        <taxon>Oryzeae</taxon>
        <taxon>Oryzinae</taxon>
        <taxon>Oryza</taxon>
        <taxon>Oryza sativa</taxon>
    </lineage>
</organism>
<dbReference type="EC" id="2.7.11.1"/>
<dbReference type="EMBL" id="AY207043">
    <property type="protein sequence ID" value="AAO65504.1"/>
    <property type="status" value="ALT_INIT"/>
    <property type="molecule type" value="mRNA"/>
</dbReference>
<dbReference type="EMBL" id="CM000132">
    <property type="protein sequence ID" value="EEC82470.1"/>
    <property type="molecule type" value="Genomic_DNA"/>
</dbReference>
<dbReference type="SMR" id="A2YNT8"/>
<dbReference type="STRING" id="39946.A2YNT8"/>
<dbReference type="EnsemblPlants" id="BGIOSGA026164-TA">
    <property type="protein sequence ID" value="BGIOSGA026164-PA"/>
    <property type="gene ID" value="BGIOSGA026164"/>
</dbReference>
<dbReference type="EnsemblPlants" id="OsGoSa_07g0023490.01">
    <property type="protein sequence ID" value="OsGoSa_07g0023490.01"/>
    <property type="gene ID" value="OsGoSa_07g0023490"/>
</dbReference>
<dbReference type="EnsemblPlants" id="OsIR64_07g0024180.01">
    <property type="protein sequence ID" value="OsIR64_07g0024180.01"/>
    <property type="gene ID" value="OsIR64_07g0024180"/>
</dbReference>
<dbReference type="EnsemblPlants" id="OsKYG_07g0023590.01">
    <property type="protein sequence ID" value="OsKYG_07g0023590.01"/>
    <property type="gene ID" value="OsKYG_07g0023590"/>
</dbReference>
<dbReference type="EnsemblPlants" id="OsLaMu_07g0023450.01">
    <property type="protein sequence ID" value="OsLaMu_07g0023450.01"/>
    <property type="gene ID" value="OsLaMu_07g0023450"/>
</dbReference>
<dbReference type="EnsemblPlants" id="OsLima_07g0023440.01">
    <property type="protein sequence ID" value="OsLima_07g0023440.01"/>
    <property type="gene ID" value="OsLima_07g0023440"/>
</dbReference>
<dbReference type="EnsemblPlants" id="OsLiXu_07g0023690.01">
    <property type="protein sequence ID" value="OsLiXu_07g0023690.01"/>
    <property type="gene ID" value="OsLiXu_07g0023690"/>
</dbReference>
<dbReference type="EnsemblPlants" id="OsMH63_07G023360_03">
    <property type="protein sequence ID" value="OsMH63_07G023360_03"/>
    <property type="gene ID" value="OsMH63_07G023360"/>
</dbReference>
<dbReference type="EnsemblPlants" id="OsPr106_07g0023670.01">
    <property type="protein sequence ID" value="OsPr106_07g0023670.01"/>
    <property type="gene ID" value="OsPr106_07g0023670"/>
</dbReference>
<dbReference type="EnsemblPlants" id="OsZS97_07G023280_02">
    <property type="protein sequence ID" value="OsZS97_07G023280_02"/>
    <property type="gene ID" value="OsZS97_07G023280"/>
</dbReference>
<dbReference type="Gramene" id="BGIOSGA026164-TA">
    <property type="protein sequence ID" value="BGIOSGA026164-PA"/>
    <property type="gene ID" value="BGIOSGA026164"/>
</dbReference>
<dbReference type="Gramene" id="OsGoSa_07g0023490.01">
    <property type="protein sequence ID" value="OsGoSa_07g0023490.01"/>
    <property type="gene ID" value="OsGoSa_07g0023490"/>
</dbReference>
<dbReference type="Gramene" id="OsIR64_07g0024180.01">
    <property type="protein sequence ID" value="OsIR64_07g0024180.01"/>
    <property type="gene ID" value="OsIR64_07g0024180"/>
</dbReference>
<dbReference type="Gramene" id="OsKYG_07g0023590.01">
    <property type="protein sequence ID" value="OsKYG_07g0023590.01"/>
    <property type="gene ID" value="OsKYG_07g0023590"/>
</dbReference>
<dbReference type="Gramene" id="OsLaMu_07g0023450.01">
    <property type="protein sequence ID" value="OsLaMu_07g0023450.01"/>
    <property type="gene ID" value="OsLaMu_07g0023450"/>
</dbReference>
<dbReference type="Gramene" id="OsLima_07g0023440.01">
    <property type="protein sequence ID" value="OsLima_07g0023440.01"/>
    <property type="gene ID" value="OsLima_07g0023440"/>
</dbReference>
<dbReference type="Gramene" id="OsLiXu_07g0023690.01">
    <property type="protein sequence ID" value="OsLiXu_07g0023690.01"/>
    <property type="gene ID" value="OsLiXu_07g0023690"/>
</dbReference>
<dbReference type="Gramene" id="OsMH63_07G023360_03">
    <property type="protein sequence ID" value="OsMH63_07G023360_03"/>
    <property type="gene ID" value="OsMH63_07G023360"/>
</dbReference>
<dbReference type="Gramene" id="OsPr106_07g0023670.01">
    <property type="protein sequence ID" value="OsPr106_07g0023670.01"/>
    <property type="gene ID" value="OsPr106_07g0023670"/>
</dbReference>
<dbReference type="Gramene" id="OsZS97_07G023280_02">
    <property type="protein sequence ID" value="OsZS97_07G023280_02"/>
    <property type="gene ID" value="OsZS97_07G023280"/>
</dbReference>
<dbReference type="HOGENOM" id="CLU_000288_63_0_1"/>
<dbReference type="OMA" id="ISANFRV"/>
<dbReference type="OrthoDB" id="193931at2759"/>
<dbReference type="Proteomes" id="UP000007015">
    <property type="component" value="Chromosome 7"/>
</dbReference>
<dbReference type="GO" id="GO:0005737">
    <property type="term" value="C:cytoplasm"/>
    <property type="evidence" value="ECO:0007669"/>
    <property type="project" value="EnsemblPlants"/>
</dbReference>
<dbReference type="GO" id="GO:0005634">
    <property type="term" value="C:nucleus"/>
    <property type="evidence" value="ECO:0007669"/>
    <property type="project" value="EnsemblPlants"/>
</dbReference>
<dbReference type="GO" id="GO:0005524">
    <property type="term" value="F:ATP binding"/>
    <property type="evidence" value="ECO:0007669"/>
    <property type="project" value="UniProtKB-KW"/>
</dbReference>
<dbReference type="GO" id="GO:0106310">
    <property type="term" value="F:protein serine kinase activity"/>
    <property type="evidence" value="ECO:0007669"/>
    <property type="project" value="RHEA"/>
</dbReference>
<dbReference type="GO" id="GO:0004674">
    <property type="term" value="F:protein serine/threonine kinase activity"/>
    <property type="evidence" value="ECO:0007669"/>
    <property type="project" value="UniProtKB-KW"/>
</dbReference>
<dbReference type="GO" id="GO:0009738">
    <property type="term" value="P:abscisic acid-activated signaling pathway"/>
    <property type="evidence" value="ECO:0007669"/>
    <property type="project" value="UniProtKB-KW"/>
</dbReference>
<dbReference type="GO" id="GO:0009845">
    <property type="term" value="P:seed germination"/>
    <property type="evidence" value="ECO:0007669"/>
    <property type="project" value="EnsemblPlants"/>
</dbReference>
<dbReference type="CDD" id="cd14662">
    <property type="entry name" value="STKc_SnRK2"/>
    <property type="match status" value="1"/>
</dbReference>
<dbReference type="FunFam" id="3.30.200.20:FF:000237">
    <property type="entry name" value="Serine/threonine-protein kinase SAPK2"/>
    <property type="match status" value="1"/>
</dbReference>
<dbReference type="FunFam" id="1.10.510.10:FF:000085">
    <property type="entry name" value="Serine/threonine-protein kinase SRK2E"/>
    <property type="match status" value="1"/>
</dbReference>
<dbReference type="Gene3D" id="3.30.200.20">
    <property type="entry name" value="Phosphorylase Kinase, domain 1"/>
    <property type="match status" value="1"/>
</dbReference>
<dbReference type="Gene3D" id="1.10.510.10">
    <property type="entry name" value="Transferase(Phosphotransferase) domain 1"/>
    <property type="match status" value="1"/>
</dbReference>
<dbReference type="InterPro" id="IPR011009">
    <property type="entry name" value="Kinase-like_dom_sf"/>
</dbReference>
<dbReference type="InterPro" id="IPR000719">
    <property type="entry name" value="Prot_kinase_dom"/>
</dbReference>
<dbReference type="InterPro" id="IPR017441">
    <property type="entry name" value="Protein_kinase_ATP_BS"/>
</dbReference>
<dbReference type="InterPro" id="IPR008271">
    <property type="entry name" value="Ser/Thr_kinase_AS"/>
</dbReference>
<dbReference type="PANTHER" id="PTHR24343">
    <property type="entry name" value="SERINE/THREONINE KINASE"/>
    <property type="match status" value="1"/>
</dbReference>
<dbReference type="PANTHER" id="PTHR24343:SF542">
    <property type="entry name" value="SERINE_THREONINE-PROTEIN KINASE SAPK2"/>
    <property type="match status" value="1"/>
</dbReference>
<dbReference type="Pfam" id="PF00069">
    <property type="entry name" value="Pkinase"/>
    <property type="match status" value="1"/>
</dbReference>
<dbReference type="SMART" id="SM00220">
    <property type="entry name" value="S_TKc"/>
    <property type="match status" value="1"/>
</dbReference>
<dbReference type="SUPFAM" id="SSF56112">
    <property type="entry name" value="Protein kinase-like (PK-like)"/>
    <property type="match status" value="1"/>
</dbReference>
<dbReference type="PROSITE" id="PS00107">
    <property type="entry name" value="PROTEIN_KINASE_ATP"/>
    <property type="match status" value="1"/>
</dbReference>
<dbReference type="PROSITE" id="PS50011">
    <property type="entry name" value="PROTEIN_KINASE_DOM"/>
    <property type="match status" value="1"/>
</dbReference>
<dbReference type="PROSITE" id="PS00108">
    <property type="entry name" value="PROTEIN_KINASE_ST"/>
    <property type="match status" value="1"/>
</dbReference>
<protein>
    <recommendedName>
        <fullName>Serine/threonine-protein kinase SAPK2</fullName>
        <ecNumber>2.7.11.1</ecNumber>
    </recommendedName>
    <alternativeName>
        <fullName>Osmotic stress/abscisic acid-activated protein kinase 2</fullName>
    </alternativeName>
</protein>
<feature type="chain" id="PRO_0000301652" description="Serine/threonine-protein kinase SAPK2">
    <location>
        <begin position="1"/>
        <end position="339"/>
    </location>
</feature>
<feature type="domain" description="Protein kinase" evidence="3">
    <location>
        <begin position="4"/>
        <end position="260"/>
    </location>
</feature>
<feature type="region of interest" description="C-terminal">
    <location>
        <begin position="253"/>
        <end position="339"/>
    </location>
</feature>
<feature type="active site" description="Proton acceptor" evidence="3 4">
    <location>
        <position position="123"/>
    </location>
</feature>
<feature type="binding site" evidence="3">
    <location>
        <begin position="10"/>
        <end position="18"/>
    </location>
    <ligand>
        <name>ATP</name>
        <dbReference type="ChEBI" id="CHEBI:30616"/>
    </ligand>
</feature>
<feature type="binding site" evidence="3">
    <location>
        <position position="33"/>
    </location>
    <ligand>
        <name>ATP</name>
        <dbReference type="ChEBI" id="CHEBI:30616"/>
    </ligand>
</feature>
<feature type="sequence conflict" description="In Ref. 1; AAO65504." evidence="5" ref="1">
    <original>V</original>
    <variation>L</variation>
    <location>
        <position position="151"/>
    </location>
</feature>
<feature type="sequence conflict" description="In Ref. 1; AAO65504." evidence="5" ref="1">
    <original>I</original>
    <variation>V</variation>
    <location>
        <position position="322"/>
    </location>
</feature>
<gene>
    <name type="primary">SAPK2</name>
    <name evidence="6" type="ORF">OsI_26911</name>
</gene>
<keyword id="KW-0938">Abscisic acid signaling pathway</keyword>
<keyword id="KW-0067">ATP-binding</keyword>
<keyword id="KW-0418">Kinase</keyword>
<keyword id="KW-0547">Nucleotide-binding</keyword>
<keyword id="KW-0597">Phosphoprotein</keyword>
<keyword id="KW-1185">Reference proteome</keyword>
<keyword id="KW-0723">Serine/threonine-protein kinase</keyword>
<keyword id="KW-0346">Stress response</keyword>
<keyword id="KW-0808">Transferase</keyword>
<sequence length="339" mass="38538">MERYEVIKDIGSGNFGVAKLVRDVRTKELFAVKFIERGQKIDENVQREIMNHRSLRHPNIVRFKEVVLTPTHLAIVMEYAAGGELFERICSAGRFSEDEARFFFQQLISGVSYCHSMQICHRDLKLENTLLDGSIAPRLKICDFGYSKSSVLHSQPKSTVGTPAYIAPEVLARKEYDGKVADVWSCGVTLYVMLVGAYPFEDPDEPRNFRKTITRILSVQYMVPDYVRVSMECRHLLSRIFVANPEQRITIPEIKNHPWFLKNLPIEMTDEYQMSVQMNDINTPSQGLEEIMAIIQEARKPGDGSKFSGQIPGLGSMELDDIDTDDIDVEDSGDFVCAL</sequence>